<keyword id="KW-0413">Isomerase</keyword>
<keyword id="KW-0819">tRNA processing</keyword>
<organism>
    <name type="scientific">Xanthomonas campestris pv. campestris (strain B100)</name>
    <dbReference type="NCBI Taxonomy" id="509169"/>
    <lineage>
        <taxon>Bacteria</taxon>
        <taxon>Pseudomonadati</taxon>
        <taxon>Pseudomonadota</taxon>
        <taxon>Gammaproteobacteria</taxon>
        <taxon>Lysobacterales</taxon>
        <taxon>Lysobacteraceae</taxon>
        <taxon>Xanthomonas</taxon>
    </lineage>
</organism>
<proteinExistence type="inferred from homology"/>
<gene>
    <name evidence="1" type="primary">truA</name>
    <name type="ordered locus">xcc-b100_1616</name>
</gene>
<dbReference type="EC" id="5.4.99.12" evidence="1"/>
<dbReference type="EMBL" id="AM920689">
    <property type="protein sequence ID" value="CAP50966.1"/>
    <property type="molecule type" value="Genomic_DNA"/>
</dbReference>
<dbReference type="SMR" id="B0RR81"/>
<dbReference type="KEGG" id="xca:xcc-b100_1616"/>
<dbReference type="HOGENOM" id="CLU_014673_0_2_6"/>
<dbReference type="Proteomes" id="UP000001188">
    <property type="component" value="Chromosome"/>
</dbReference>
<dbReference type="GO" id="GO:0003723">
    <property type="term" value="F:RNA binding"/>
    <property type="evidence" value="ECO:0007669"/>
    <property type="project" value="InterPro"/>
</dbReference>
<dbReference type="GO" id="GO:0160147">
    <property type="term" value="F:tRNA pseudouridine(38-40) synthase activity"/>
    <property type="evidence" value="ECO:0007669"/>
    <property type="project" value="UniProtKB-EC"/>
</dbReference>
<dbReference type="GO" id="GO:0031119">
    <property type="term" value="P:tRNA pseudouridine synthesis"/>
    <property type="evidence" value="ECO:0007669"/>
    <property type="project" value="UniProtKB-UniRule"/>
</dbReference>
<dbReference type="CDD" id="cd02570">
    <property type="entry name" value="PseudoU_synth_EcTruA"/>
    <property type="match status" value="1"/>
</dbReference>
<dbReference type="FunFam" id="3.30.70.580:FF:000001">
    <property type="entry name" value="tRNA pseudouridine synthase A"/>
    <property type="match status" value="1"/>
</dbReference>
<dbReference type="Gene3D" id="3.30.70.660">
    <property type="entry name" value="Pseudouridine synthase I, catalytic domain, C-terminal subdomain"/>
    <property type="match status" value="1"/>
</dbReference>
<dbReference type="Gene3D" id="3.30.70.580">
    <property type="entry name" value="Pseudouridine synthase I, catalytic domain, N-terminal subdomain"/>
    <property type="match status" value="1"/>
</dbReference>
<dbReference type="HAMAP" id="MF_00171">
    <property type="entry name" value="TruA"/>
    <property type="match status" value="1"/>
</dbReference>
<dbReference type="InterPro" id="IPR020103">
    <property type="entry name" value="PsdUridine_synth_cat_dom_sf"/>
</dbReference>
<dbReference type="InterPro" id="IPR001406">
    <property type="entry name" value="PsdUridine_synth_TruA"/>
</dbReference>
<dbReference type="InterPro" id="IPR020097">
    <property type="entry name" value="PsdUridine_synth_TruA_a/b_dom"/>
</dbReference>
<dbReference type="InterPro" id="IPR020095">
    <property type="entry name" value="PsdUridine_synth_TruA_C"/>
</dbReference>
<dbReference type="InterPro" id="IPR020094">
    <property type="entry name" value="TruA/RsuA/RluB/E/F_N"/>
</dbReference>
<dbReference type="NCBIfam" id="TIGR00071">
    <property type="entry name" value="hisT_truA"/>
    <property type="match status" value="1"/>
</dbReference>
<dbReference type="PANTHER" id="PTHR11142">
    <property type="entry name" value="PSEUDOURIDYLATE SYNTHASE"/>
    <property type="match status" value="1"/>
</dbReference>
<dbReference type="PANTHER" id="PTHR11142:SF0">
    <property type="entry name" value="TRNA PSEUDOURIDINE SYNTHASE-LIKE 1"/>
    <property type="match status" value="1"/>
</dbReference>
<dbReference type="Pfam" id="PF01416">
    <property type="entry name" value="PseudoU_synth_1"/>
    <property type="match status" value="2"/>
</dbReference>
<dbReference type="PIRSF" id="PIRSF001430">
    <property type="entry name" value="tRNA_psdUrid_synth"/>
    <property type="match status" value="1"/>
</dbReference>
<dbReference type="SUPFAM" id="SSF55120">
    <property type="entry name" value="Pseudouridine synthase"/>
    <property type="match status" value="1"/>
</dbReference>
<protein>
    <recommendedName>
        <fullName evidence="1">tRNA pseudouridine synthase A</fullName>
        <ecNumber evidence="1">5.4.99.12</ecNumber>
    </recommendedName>
    <alternativeName>
        <fullName evidence="1">tRNA pseudouridine(38-40) synthase</fullName>
    </alternativeName>
    <alternativeName>
        <fullName evidence="1">tRNA pseudouridylate synthase I</fullName>
    </alternativeName>
    <alternativeName>
        <fullName evidence="1">tRNA-uridine isomerase I</fullName>
    </alternativeName>
</protein>
<evidence type="ECO:0000255" key="1">
    <source>
        <dbReference type="HAMAP-Rule" id="MF_00171"/>
    </source>
</evidence>
<sequence length="257" mass="28387">MRYALGVEYDGSEFQGWQQLGEHGGPSVQATLQAALSSVADAPIQVVCAGRTDAGVHGECQVVHFDSDARREPRGWMLGTTARLPPSVAVRWCVPAAEDFHARFSARARRYRYRLLNRQIRPALYRQTLSWERRPLDAQAMHTAAQALLGENDFGAFRSVQCQALHARRNLQAITVQRLGEVVEVQVQANAFLHHMVRNIVGSLILVGTGEQPIDWIATLLAGRDRTVAGPTAPPQGLVFIGPLYPAEWHLPAEVTQ</sequence>
<name>TRUA_XANCB</name>
<comment type="function">
    <text evidence="1">Formation of pseudouridine at positions 38, 39 and 40 in the anticodon stem and loop of transfer RNAs.</text>
</comment>
<comment type="catalytic activity">
    <reaction evidence="1">
        <text>uridine(38/39/40) in tRNA = pseudouridine(38/39/40) in tRNA</text>
        <dbReference type="Rhea" id="RHEA:22376"/>
        <dbReference type="Rhea" id="RHEA-COMP:10085"/>
        <dbReference type="Rhea" id="RHEA-COMP:10087"/>
        <dbReference type="ChEBI" id="CHEBI:65314"/>
        <dbReference type="ChEBI" id="CHEBI:65315"/>
        <dbReference type="EC" id="5.4.99.12"/>
    </reaction>
</comment>
<comment type="subunit">
    <text evidence="1">Homodimer.</text>
</comment>
<comment type="similarity">
    <text evidence="1">Belongs to the tRNA pseudouridine synthase TruA family.</text>
</comment>
<reference key="1">
    <citation type="journal article" date="2008" name="J. Biotechnol.">
        <title>The genome of Xanthomonas campestris pv. campestris B100 and its use for the reconstruction of metabolic pathways involved in xanthan biosynthesis.</title>
        <authorList>
            <person name="Vorhoelter F.-J."/>
            <person name="Schneiker S."/>
            <person name="Goesmann A."/>
            <person name="Krause L."/>
            <person name="Bekel T."/>
            <person name="Kaiser O."/>
            <person name="Linke B."/>
            <person name="Patschkowski T."/>
            <person name="Rueckert C."/>
            <person name="Schmid J."/>
            <person name="Sidhu V.K."/>
            <person name="Sieber V."/>
            <person name="Tauch A."/>
            <person name="Watt S.A."/>
            <person name="Weisshaar B."/>
            <person name="Becker A."/>
            <person name="Niehaus K."/>
            <person name="Puehler A."/>
        </authorList>
    </citation>
    <scope>NUCLEOTIDE SEQUENCE [LARGE SCALE GENOMIC DNA]</scope>
    <source>
        <strain>B100</strain>
    </source>
</reference>
<accession>B0RR81</accession>
<feature type="chain" id="PRO_1000097806" description="tRNA pseudouridine synthase A">
    <location>
        <begin position="1"/>
        <end position="257"/>
    </location>
</feature>
<feature type="active site" description="Nucleophile" evidence="1">
    <location>
        <position position="53"/>
    </location>
</feature>
<feature type="binding site" evidence="1">
    <location>
        <position position="111"/>
    </location>
    <ligand>
        <name>substrate</name>
    </ligand>
</feature>